<reference key="1">
    <citation type="submission" date="2006-06" db="EMBL/GenBank/DDBJ databases">
        <title>Complete sequence of chromosome of Mesorhizobium sp. BNC1.</title>
        <authorList>
            <consortium name="US DOE Joint Genome Institute"/>
            <person name="Copeland A."/>
            <person name="Lucas S."/>
            <person name="Lapidus A."/>
            <person name="Barry K."/>
            <person name="Detter J.C."/>
            <person name="Glavina del Rio T."/>
            <person name="Hammon N."/>
            <person name="Israni S."/>
            <person name="Dalin E."/>
            <person name="Tice H."/>
            <person name="Pitluck S."/>
            <person name="Chertkov O."/>
            <person name="Brettin T."/>
            <person name="Bruce D."/>
            <person name="Han C."/>
            <person name="Tapia R."/>
            <person name="Gilna P."/>
            <person name="Schmutz J."/>
            <person name="Larimer F."/>
            <person name="Land M."/>
            <person name="Hauser L."/>
            <person name="Kyrpides N."/>
            <person name="Mikhailova N."/>
            <person name="Richardson P."/>
        </authorList>
    </citation>
    <scope>NUCLEOTIDE SEQUENCE [LARGE SCALE GENOMIC DNA]</scope>
    <source>
        <strain>BNC1</strain>
    </source>
</reference>
<name>SYFA_CHESB</name>
<comment type="catalytic activity">
    <reaction evidence="1">
        <text>tRNA(Phe) + L-phenylalanine + ATP = L-phenylalanyl-tRNA(Phe) + AMP + diphosphate + H(+)</text>
        <dbReference type="Rhea" id="RHEA:19413"/>
        <dbReference type="Rhea" id="RHEA-COMP:9668"/>
        <dbReference type="Rhea" id="RHEA-COMP:9699"/>
        <dbReference type="ChEBI" id="CHEBI:15378"/>
        <dbReference type="ChEBI" id="CHEBI:30616"/>
        <dbReference type="ChEBI" id="CHEBI:33019"/>
        <dbReference type="ChEBI" id="CHEBI:58095"/>
        <dbReference type="ChEBI" id="CHEBI:78442"/>
        <dbReference type="ChEBI" id="CHEBI:78531"/>
        <dbReference type="ChEBI" id="CHEBI:456215"/>
        <dbReference type="EC" id="6.1.1.20"/>
    </reaction>
</comment>
<comment type="cofactor">
    <cofactor evidence="1">
        <name>Mg(2+)</name>
        <dbReference type="ChEBI" id="CHEBI:18420"/>
    </cofactor>
    <text evidence="1">Binds 2 magnesium ions per tetramer.</text>
</comment>
<comment type="subunit">
    <text evidence="1">Tetramer of two alpha and two beta subunits.</text>
</comment>
<comment type="subcellular location">
    <subcellularLocation>
        <location evidence="1">Cytoplasm</location>
    </subcellularLocation>
</comment>
<comment type="similarity">
    <text evidence="1">Belongs to the class-II aminoacyl-tRNA synthetase family. Phe-tRNA synthetase alpha subunit type 1 subfamily.</text>
</comment>
<organism>
    <name type="scientific">Chelativorans sp. (strain BNC1)</name>
    <dbReference type="NCBI Taxonomy" id="266779"/>
    <lineage>
        <taxon>Bacteria</taxon>
        <taxon>Pseudomonadati</taxon>
        <taxon>Pseudomonadota</taxon>
        <taxon>Alphaproteobacteria</taxon>
        <taxon>Hyphomicrobiales</taxon>
        <taxon>Phyllobacteriaceae</taxon>
        <taxon>Chelativorans</taxon>
    </lineage>
</organism>
<proteinExistence type="inferred from homology"/>
<dbReference type="EC" id="6.1.1.20" evidence="1"/>
<dbReference type="EMBL" id="CP000390">
    <property type="protein sequence ID" value="ABG62076.1"/>
    <property type="molecule type" value="Genomic_DNA"/>
</dbReference>
<dbReference type="SMR" id="Q11KJ9"/>
<dbReference type="STRING" id="266779.Meso_0676"/>
<dbReference type="KEGG" id="mes:Meso_0676"/>
<dbReference type="eggNOG" id="COG0016">
    <property type="taxonomic scope" value="Bacteria"/>
</dbReference>
<dbReference type="HOGENOM" id="CLU_025086_0_1_5"/>
<dbReference type="OrthoDB" id="9800719at2"/>
<dbReference type="GO" id="GO:0005737">
    <property type="term" value="C:cytoplasm"/>
    <property type="evidence" value="ECO:0007669"/>
    <property type="project" value="UniProtKB-SubCell"/>
</dbReference>
<dbReference type="GO" id="GO:0005524">
    <property type="term" value="F:ATP binding"/>
    <property type="evidence" value="ECO:0007669"/>
    <property type="project" value="UniProtKB-UniRule"/>
</dbReference>
<dbReference type="GO" id="GO:0000287">
    <property type="term" value="F:magnesium ion binding"/>
    <property type="evidence" value="ECO:0007669"/>
    <property type="project" value="UniProtKB-UniRule"/>
</dbReference>
<dbReference type="GO" id="GO:0004826">
    <property type="term" value="F:phenylalanine-tRNA ligase activity"/>
    <property type="evidence" value="ECO:0007669"/>
    <property type="project" value="UniProtKB-UniRule"/>
</dbReference>
<dbReference type="GO" id="GO:0000049">
    <property type="term" value="F:tRNA binding"/>
    <property type="evidence" value="ECO:0007669"/>
    <property type="project" value="InterPro"/>
</dbReference>
<dbReference type="GO" id="GO:0006432">
    <property type="term" value="P:phenylalanyl-tRNA aminoacylation"/>
    <property type="evidence" value="ECO:0007669"/>
    <property type="project" value="UniProtKB-UniRule"/>
</dbReference>
<dbReference type="CDD" id="cd00496">
    <property type="entry name" value="PheRS_alpha_core"/>
    <property type="match status" value="1"/>
</dbReference>
<dbReference type="FunFam" id="3.30.930.10:FF:000003">
    <property type="entry name" value="Phenylalanine--tRNA ligase alpha subunit"/>
    <property type="match status" value="1"/>
</dbReference>
<dbReference type="Gene3D" id="3.30.930.10">
    <property type="entry name" value="Bira Bifunctional Protein, Domain 2"/>
    <property type="match status" value="1"/>
</dbReference>
<dbReference type="HAMAP" id="MF_00281">
    <property type="entry name" value="Phe_tRNA_synth_alpha1"/>
    <property type="match status" value="1"/>
</dbReference>
<dbReference type="InterPro" id="IPR006195">
    <property type="entry name" value="aa-tRNA-synth_II"/>
</dbReference>
<dbReference type="InterPro" id="IPR045864">
    <property type="entry name" value="aa-tRNA-synth_II/BPL/LPL"/>
</dbReference>
<dbReference type="InterPro" id="IPR004529">
    <property type="entry name" value="Phe-tRNA-synth_IIc_asu"/>
</dbReference>
<dbReference type="InterPro" id="IPR004188">
    <property type="entry name" value="Phe-tRNA_ligase_II_N"/>
</dbReference>
<dbReference type="InterPro" id="IPR022911">
    <property type="entry name" value="Phe_tRNA_ligase_alpha1_bac"/>
</dbReference>
<dbReference type="InterPro" id="IPR002319">
    <property type="entry name" value="Phenylalanyl-tRNA_Synthase"/>
</dbReference>
<dbReference type="InterPro" id="IPR010978">
    <property type="entry name" value="tRNA-bd_arm"/>
</dbReference>
<dbReference type="NCBIfam" id="TIGR00468">
    <property type="entry name" value="pheS"/>
    <property type="match status" value="1"/>
</dbReference>
<dbReference type="PANTHER" id="PTHR11538:SF41">
    <property type="entry name" value="PHENYLALANINE--TRNA LIGASE, MITOCHONDRIAL"/>
    <property type="match status" value="1"/>
</dbReference>
<dbReference type="PANTHER" id="PTHR11538">
    <property type="entry name" value="PHENYLALANYL-TRNA SYNTHETASE"/>
    <property type="match status" value="1"/>
</dbReference>
<dbReference type="Pfam" id="PF02912">
    <property type="entry name" value="Phe_tRNA-synt_N"/>
    <property type="match status" value="1"/>
</dbReference>
<dbReference type="Pfam" id="PF01409">
    <property type="entry name" value="tRNA-synt_2d"/>
    <property type="match status" value="1"/>
</dbReference>
<dbReference type="SUPFAM" id="SSF55681">
    <property type="entry name" value="Class II aaRS and biotin synthetases"/>
    <property type="match status" value="1"/>
</dbReference>
<dbReference type="SUPFAM" id="SSF46589">
    <property type="entry name" value="tRNA-binding arm"/>
    <property type="match status" value="1"/>
</dbReference>
<dbReference type="PROSITE" id="PS50862">
    <property type="entry name" value="AA_TRNA_LIGASE_II"/>
    <property type="match status" value="1"/>
</dbReference>
<keyword id="KW-0030">Aminoacyl-tRNA synthetase</keyword>
<keyword id="KW-0067">ATP-binding</keyword>
<keyword id="KW-0963">Cytoplasm</keyword>
<keyword id="KW-0436">Ligase</keyword>
<keyword id="KW-0460">Magnesium</keyword>
<keyword id="KW-0479">Metal-binding</keyword>
<keyword id="KW-0547">Nucleotide-binding</keyword>
<keyword id="KW-0648">Protein biosynthesis</keyword>
<feature type="chain" id="PRO_1000006859" description="Phenylalanine--tRNA ligase alpha subunit">
    <location>
        <begin position="1"/>
        <end position="361"/>
    </location>
</feature>
<feature type="binding site" evidence="1">
    <location>
        <position position="260"/>
    </location>
    <ligand>
        <name>Mg(2+)</name>
        <dbReference type="ChEBI" id="CHEBI:18420"/>
        <note>shared with beta subunit</note>
    </ligand>
</feature>
<sequence>MNDLDQLEKKIMDEIAEAGDEQTVEAVRVAALGKKGTVSEKLKTLGSMSPEERQVMGPAINGLKNRVTEALAARRAELRDIAIAARLEREKVDVTLPMPRPPAERGRIHPITQVIDEIAAIFGDLGFSIAEGPDIETDYYNFTALNFPEGHPAREMHDTFFFEPDEKGERKLLRTHTSPVQIRTMEAQKPPIRIVIPGKTYRSDSDATHTPMFHQLEGLVIDKTANVANMKWVLTEFCKAYFEVPSLNMRFRPSFFPFTEPSLEVDIQCDRSKPGEIRFGEGNDWLEILGCGMVHSNVLRHGGLDPDEYQGFAWGMGIDRIAMLKYGMPDLRAFFDADVRWLEHYGFRPLDLPTLFGGLSS</sequence>
<accession>Q11KJ9</accession>
<gene>
    <name evidence="1" type="primary">pheS</name>
    <name type="ordered locus">Meso_0676</name>
</gene>
<protein>
    <recommendedName>
        <fullName evidence="1">Phenylalanine--tRNA ligase alpha subunit</fullName>
        <ecNumber evidence="1">6.1.1.20</ecNumber>
    </recommendedName>
    <alternativeName>
        <fullName evidence="1">Phenylalanyl-tRNA synthetase alpha subunit</fullName>
        <shortName evidence="1">PheRS</shortName>
    </alternativeName>
</protein>
<evidence type="ECO:0000255" key="1">
    <source>
        <dbReference type="HAMAP-Rule" id="MF_00281"/>
    </source>
</evidence>